<protein>
    <recommendedName>
        <fullName>Cytochrome c oxidase subunit 3</fullName>
        <ecNumber>7.1.1.9</ecNumber>
    </recommendedName>
    <alternativeName>
        <fullName>Cytochrome c oxidase polypeptide III</fullName>
    </alternativeName>
</protein>
<dbReference type="EC" id="7.1.1.9"/>
<dbReference type="EMBL" id="D16387">
    <property type="protein sequence ID" value="BAA03885.2"/>
    <property type="molecule type" value="Genomic_DNA"/>
</dbReference>
<dbReference type="EMBL" id="M17619">
    <property type="protein sequence ID" value="AAA65514.2"/>
    <property type="molecule type" value="Genomic_DNA"/>
</dbReference>
<dbReference type="PIR" id="S70589">
    <property type="entry name" value="S70589"/>
</dbReference>
<dbReference type="SMR" id="Q33824"/>
<dbReference type="CTD" id="4514"/>
<dbReference type="GO" id="GO:0005743">
    <property type="term" value="C:mitochondrial inner membrane"/>
    <property type="evidence" value="ECO:0007669"/>
    <property type="project" value="UniProtKB-SubCell"/>
</dbReference>
<dbReference type="GO" id="GO:0004129">
    <property type="term" value="F:cytochrome-c oxidase activity"/>
    <property type="evidence" value="ECO:0007669"/>
    <property type="project" value="UniProtKB-EC"/>
</dbReference>
<dbReference type="GO" id="GO:0006123">
    <property type="term" value="P:mitochondrial electron transport, cytochrome c to oxygen"/>
    <property type="evidence" value="ECO:0007669"/>
    <property type="project" value="TreeGrafter"/>
</dbReference>
<dbReference type="CDD" id="cd01665">
    <property type="entry name" value="Cyt_c_Oxidase_III"/>
    <property type="match status" value="1"/>
</dbReference>
<dbReference type="FunFam" id="1.10.287.70:FF:000082">
    <property type="entry name" value="Cytochrome c oxidase subunit 3"/>
    <property type="match status" value="1"/>
</dbReference>
<dbReference type="FunFam" id="1.20.120.80:FF:000002">
    <property type="entry name" value="Cytochrome c oxidase subunit 3"/>
    <property type="match status" value="1"/>
</dbReference>
<dbReference type="Gene3D" id="1.10.287.70">
    <property type="match status" value="1"/>
</dbReference>
<dbReference type="Gene3D" id="1.20.120.80">
    <property type="entry name" value="Cytochrome c oxidase, subunit III, four-helix bundle"/>
    <property type="match status" value="1"/>
</dbReference>
<dbReference type="InterPro" id="IPR024791">
    <property type="entry name" value="Cyt_c/ubiquinol_Oxase_su3"/>
</dbReference>
<dbReference type="InterPro" id="IPR033945">
    <property type="entry name" value="Cyt_c_oxase_su3_dom"/>
</dbReference>
<dbReference type="InterPro" id="IPR000298">
    <property type="entry name" value="Cyt_c_oxidase-like_su3"/>
</dbReference>
<dbReference type="InterPro" id="IPR035973">
    <property type="entry name" value="Cyt_c_oxidase_su3-like_sf"/>
</dbReference>
<dbReference type="InterPro" id="IPR013833">
    <property type="entry name" value="Cyt_c_oxidase_su3_a-hlx"/>
</dbReference>
<dbReference type="PANTHER" id="PTHR11403:SF7">
    <property type="entry name" value="CYTOCHROME C OXIDASE SUBUNIT 3"/>
    <property type="match status" value="1"/>
</dbReference>
<dbReference type="PANTHER" id="PTHR11403">
    <property type="entry name" value="CYTOCHROME C OXIDASE SUBUNIT III"/>
    <property type="match status" value="1"/>
</dbReference>
<dbReference type="Pfam" id="PF00510">
    <property type="entry name" value="COX3"/>
    <property type="match status" value="1"/>
</dbReference>
<dbReference type="SUPFAM" id="SSF81452">
    <property type="entry name" value="Cytochrome c oxidase subunit III-like"/>
    <property type="match status" value="1"/>
</dbReference>
<dbReference type="PROSITE" id="PS50253">
    <property type="entry name" value="COX3"/>
    <property type="match status" value="1"/>
</dbReference>
<gene>
    <name type="primary">COIII</name>
</gene>
<comment type="function">
    <text evidence="1">Component of the cytochrome c oxidase, the last enzyme in the mitochondrial electron transport chain which drives oxidative phosphorylation. The respiratory chain contains 3 multisubunit complexes succinate dehydrogenase (complex II, CII), ubiquinol-cytochrome c oxidoreductase (cytochrome b-c1 complex, complex III, CIII) and cytochrome c oxidase (complex IV, CIV), that cooperate to transfer electrons derived from NADH and succinate to molecular oxygen, creating an electrochemical gradient over the inner membrane that drives transmembrane transport and the ATP synthase. Cytochrome c oxidase is the component of the respiratory chain that catalyzes the reduction of oxygen to water. Electrons originating from reduced cytochrome c in the intermembrane space (IMS) are transferred via the dinuclear copper A center (CU(A)) of subunit 2 and heme A of subunit 1 to the active site in subunit 1, a binuclear center (BNC) formed by heme A3 and copper B (CU(B)). The BNC reduces molecular oxygen to 2 water molecules using 4 electrons from cytochrome c in the IMS and 4 protons from the mitochondrial matrix.</text>
</comment>
<comment type="catalytic activity">
    <reaction evidence="1">
        <text>4 Fe(II)-[cytochrome c] + O2 + 8 H(+)(in) = 4 Fe(III)-[cytochrome c] + 2 H2O + 4 H(+)(out)</text>
        <dbReference type="Rhea" id="RHEA:11436"/>
        <dbReference type="Rhea" id="RHEA-COMP:10350"/>
        <dbReference type="Rhea" id="RHEA-COMP:14399"/>
        <dbReference type="ChEBI" id="CHEBI:15377"/>
        <dbReference type="ChEBI" id="CHEBI:15378"/>
        <dbReference type="ChEBI" id="CHEBI:15379"/>
        <dbReference type="ChEBI" id="CHEBI:29033"/>
        <dbReference type="ChEBI" id="CHEBI:29034"/>
        <dbReference type="EC" id="7.1.1.9"/>
    </reaction>
    <physiologicalReaction direction="left-to-right" evidence="1">
        <dbReference type="Rhea" id="RHEA:11437"/>
    </physiologicalReaction>
</comment>
<comment type="subunit">
    <text evidence="1">Component of the cytochrome c oxidase (complex IV, CIV), a multisubunit enzyme composed of a catalytic core of 3 subunits and several supernumerary subunits. The complex exists as a monomer or a dimer and forms supercomplexes (SCs) in the inner mitochondrial membrane with ubiquinol-cytochrome c oxidoreductase (cytochrome b-c1 complex, complex III, CIII).</text>
</comment>
<comment type="subcellular location">
    <subcellularLocation>
        <location evidence="1">Mitochondrion inner membrane</location>
        <topology evidence="1">Multi-pass membrane protein</topology>
    </subcellularLocation>
</comment>
<comment type="similarity">
    <text evidence="3">Belongs to the cytochrome c oxidase subunit 3 family.</text>
</comment>
<accession>Q33824</accession>
<accession>P11958</accession>
<feature type="chain" id="PRO_0000183743" description="Cytochrome c oxidase subunit 3">
    <location>
        <begin position="1"/>
        <end position="260"/>
    </location>
</feature>
<feature type="transmembrane region" description="Helical" evidence="2">
    <location>
        <begin position="14"/>
        <end position="34"/>
    </location>
</feature>
<feature type="transmembrane region" description="Helical" evidence="2">
    <location>
        <begin position="41"/>
        <end position="61"/>
    </location>
</feature>
<feature type="transmembrane region" description="Helical" evidence="2">
    <location>
        <begin position="81"/>
        <end position="101"/>
    </location>
</feature>
<feature type="transmembrane region" description="Helical" evidence="2">
    <location>
        <begin position="126"/>
        <end position="146"/>
    </location>
</feature>
<feature type="transmembrane region" description="Helical" evidence="2">
    <location>
        <begin position="158"/>
        <end position="178"/>
    </location>
</feature>
<feature type="transmembrane region" description="Helical" evidence="2">
    <location>
        <begin position="196"/>
        <end position="216"/>
    </location>
</feature>
<feature type="transmembrane region" description="Helical" evidence="2">
    <location>
        <begin position="238"/>
        <end position="258"/>
    </location>
</feature>
<keyword id="KW-0472">Membrane</keyword>
<keyword id="KW-0496">Mitochondrion</keyword>
<keyword id="KW-0999">Mitochondrion inner membrane</keyword>
<keyword id="KW-1278">Translocase</keyword>
<keyword id="KW-0812">Transmembrane</keyword>
<keyword id="KW-1133">Transmembrane helix</keyword>
<organism>
    <name type="scientific">Patiria pectinifera</name>
    <name type="common">Starfish</name>
    <name type="synonym">Asterina pectinifera</name>
    <dbReference type="NCBI Taxonomy" id="7594"/>
    <lineage>
        <taxon>Eukaryota</taxon>
        <taxon>Metazoa</taxon>
        <taxon>Echinodermata</taxon>
        <taxon>Eleutherozoa</taxon>
        <taxon>Asterozoa</taxon>
        <taxon>Asteroidea</taxon>
        <taxon>Valvatacea</taxon>
        <taxon>Valvatida</taxon>
        <taxon>Asterinidae</taxon>
        <taxon>Patiria</taxon>
    </lineage>
</organism>
<sequence>MTHQHPYHLVDQSPWPLTGAISALMMTSGLILWFHTNSNHLLLAGTILLLLTVINWWRDVIREATFQGSHTLPVNTGLRYGMILFITSEVCFFFAFFWAFFHSSLAPTVELGVSWPPTGISPINPFLVPLLNTAVLLSSGVTVTWAHHSILTQNRTEAIQGLFLTVILGIYFTGLQAWEYYDSPFTIADSVYGSSFFVATGFHGLHVLIGTTFLFICFLRLITFHFSNNHHFGFEAAAWYWHFVDVVWLFLYICICWWGS</sequence>
<evidence type="ECO:0000250" key="1">
    <source>
        <dbReference type="UniProtKB" id="P00420"/>
    </source>
</evidence>
<evidence type="ECO:0000255" key="2"/>
<evidence type="ECO:0000305" key="3"/>
<name>COX3_PATPE</name>
<proteinExistence type="inferred from homology"/>
<geneLocation type="mitochondrion"/>
<reference key="1">
    <citation type="journal article" date="1995" name="Genetics">
        <title>Nucleotide sequence and gene organization of the starfish Asterina pectinifera mitochondrial genome.</title>
        <authorList>
            <person name="Asakawa S."/>
            <person name="Himeno H."/>
            <person name="Miura K."/>
            <person name="Watanabe K."/>
        </authorList>
    </citation>
    <scope>NUCLEOTIDE SEQUENCE [GENOMIC DNA]</scope>
    <source>
        <tissue>Ovary</tissue>
    </source>
</reference>
<reference key="2">
    <citation type="journal article" date="1987" name="Gene">
        <title>Unusual genetic codes and a novel gene structure for tRNA(AGYSer) in starfish mitochondrial DNA.</title>
        <authorList>
            <person name="Himeno H."/>
            <person name="Masaki H."/>
            <person name="Kawai T."/>
            <person name="Ohta T."/>
            <person name="Kumagai I."/>
            <person name="Miura K."/>
            <person name="Watanabe K."/>
        </authorList>
    </citation>
    <scope>NUCLEOTIDE SEQUENCE [GENOMIC DNA] OF 193-260</scope>
</reference>